<evidence type="ECO:0000255" key="1">
    <source>
        <dbReference type="HAMAP-Rule" id="MF_00218"/>
    </source>
</evidence>
<reference key="1">
    <citation type="journal article" date="2003" name="Nucleic Acids Res.">
        <title>Genome sequence of Chlamydophila caviae (Chlamydia psittaci GPIC): examining the role of niche-specific genes in the evolution of the Chlamydiaceae.</title>
        <authorList>
            <person name="Read T.D."/>
            <person name="Myers G.S.A."/>
            <person name="Brunham R.C."/>
            <person name="Nelson W.C."/>
            <person name="Paulsen I.T."/>
            <person name="Heidelberg J.F."/>
            <person name="Holtzapple E.K."/>
            <person name="Khouri H.M."/>
            <person name="Federova N.B."/>
            <person name="Carty H.A."/>
            <person name="Umayam L.A."/>
            <person name="Haft D.H."/>
            <person name="Peterson J.D."/>
            <person name="Beanan M.J."/>
            <person name="White O."/>
            <person name="Salzberg S.L."/>
            <person name="Hsia R.-C."/>
            <person name="McClarty G."/>
            <person name="Rank R.G."/>
            <person name="Bavoil P.M."/>
            <person name="Fraser C.M."/>
        </authorList>
    </citation>
    <scope>NUCLEOTIDE SEQUENCE [LARGE SCALE GENOMIC DNA]</scope>
    <source>
        <strain>ATCC VR-813 / DSM 19441 / 03DC25 / GPIC</strain>
    </source>
</reference>
<accession>Q821R0</accession>
<gene>
    <name evidence="1" type="primary">hemE</name>
    <name type="ordered locus">CCA_00878</name>
</gene>
<organism>
    <name type="scientific">Chlamydia caviae (strain ATCC VR-813 / DSM 19441 / 03DC25 / GPIC)</name>
    <name type="common">Chlamydophila caviae</name>
    <dbReference type="NCBI Taxonomy" id="227941"/>
    <lineage>
        <taxon>Bacteria</taxon>
        <taxon>Pseudomonadati</taxon>
        <taxon>Chlamydiota</taxon>
        <taxon>Chlamydiia</taxon>
        <taxon>Chlamydiales</taxon>
        <taxon>Chlamydiaceae</taxon>
        <taxon>Chlamydia/Chlamydophila group</taxon>
        <taxon>Chlamydia</taxon>
    </lineage>
</organism>
<keyword id="KW-0963">Cytoplasm</keyword>
<keyword id="KW-0210">Decarboxylase</keyword>
<keyword id="KW-0456">Lyase</keyword>
<keyword id="KW-0627">Porphyrin biosynthesis</keyword>
<sequence>MSGFYDVIKPKTARPPVWFLRQVGRYMPQYKELKGSQTLKAFFHNTEAITEATLLGPSLLKVDAAILFADILSLLDGFNISYDFSPGPQISFSPYEELIFTKDPQETFSYLLQAIKNLVKALDVPLIAFAASPFTMASYLLDGGASKDFPKTMAFLYQYPDKFDALLKKLTEGTVIYLKEQIHAGAAAIQLFESSSLRLPSELFSRYVTAPNTQLISQLKQCIASPISLFCRCFDENFLDLYSIGADTLHPDYHVNLNKIYKTVPQPGSLQGNIDPTLFLLPQDQLLAHLEKYLTTLKDQPNYIFNSGHGILPETPLENVQAAVLCLTSISTS</sequence>
<protein>
    <recommendedName>
        <fullName evidence="1">Uroporphyrinogen decarboxylase</fullName>
        <shortName evidence="1">UPD</shortName>
        <shortName evidence="1">URO-D</shortName>
        <ecNumber evidence="1">4.1.1.37</ecNumber>
    </recommendedName>
</protein>
<dbReference type="EC" id="4.1.1.37" evidence="1"/>
<dbReference type="EMBL" id="AE015925">
    <property type="protein sequence ID" value="AAP05619.1"/>
    <property type="molecule type" value="Genomic_DNA"/>
</dbReference>
<dbReference type="RefSeq" id="WP_011006833.1">
    <property type="nucleotide sequence ID" value="NC_003361.3"/>
</dbReference>
<dbReference type="SMR" id="Q821R0"/>
<dbReference type="STRING" id="227941.CCA_00878"/>
<dbReference type="KEGG" id="cca:CCA_00878"/>
<dbReference type="eggNOG" id="COG0407">
    <property type="taxonomic scope" value="Bacteria"/>
</dbReference>
<dbReference type="HOGENOM" id="CLU_040933_0_0_0"/>
<dbReference type="OrthoDB" id="9806656at2"/>
<dbReference type="UniPathway" id="UPA00251">
    <property type="reaction ID" value="UER00321"/>
</dbReference>
<dbReference type="Proteomes" id="UP000002193">
    <property type="component" value="Chromosome"/>
</dbReference>
<dbReference type="GO" id="GO:0005829">
    <property type="term" value="C:cytosol"/>
    <property type="evidence" value="ECO:0007669"/>
    <property type="project" value="TreeGrafter"/>
</dbReference>
<dbReference type="GO" id="GO:0004853">
    <property type="term" value="F:uroporphyrinogen decarboxylase activity"/>
    <property type="evidence" value="ECO:0007669"/>
    <property type="project" value="UniProtKB-UniRule"/>
</dbReference>
<dbReference type="GO" id="GO:0006782">
    <property type="term" value="P:protoporphyrinogen IX biosynthetic process"/>
    <property type="evidence" value="ECO:0007669"/>
    <property type="project" value="UniProtKB-UniRule"/>
</dbReference>
<dbReference type="CDD" id="cd00717">
    <property type="entry name" value="URO-D"/>
    <property type="match status" value="1"/>
</dbReference>
<dbReference type="Gene3D" id="3.20.20.210">
    <property type="match status" value="1"/>
</dbReference>
<dbReference type="HAMAP" id="MF_00218">
    <property type="entry name" value="URO_D"/>
    <property type="match status" value="1"/>
</dbReference>
<dbReference type="InterPro" id="IPR038071">
    <property type="entry name" value="UROD/MetE-like_sf"/>
</dbReference>
<dbReference type="InterPro" id="IPR006361">
    <property type="entry name" value="Uroporphyrinogen_deCO2ase_HemE"/>
</dbReference>
<dbReference type="InterPro" id="IPR000257">
    <property type="entry name" value="Uroporphyrinogen_deCOase"/>
</dbReference>
<dbReference type="NCBIfam" id="TIGR01464">
    <property type="entry name" value="hemE"/>
    <property type="match status" value="1"/>
</dbReference>
<dbReference type="PANTHER" id="PTHR21091">
    <property type="entry name" value="METHYLTETRAHYDROFOLATE:HOMOCYSTEINE METHYLTRANSFERASE RELATED"/>
    <property type="match status" value="1"/>
</dbReference>
<dbReference type="PANTHER" id="PTHR21091:SF169">
    <property type="entry name" value="UROPORPHYRINOGEN DECARBOXYLASE"/>
    <property type="match status" value="1"/>
</dbReference>
<dbReference type="Pfam" id="PF01208">
    <property type="entry name" value="URO-D"/>
    <property type="match status" value="1"/>
</dbReference>
<dbReference type="SUPFAM" id="SSF51726">
    <property type="entry name" value="UROD/MetE-like"/>
    <property type="match status" value="1"/>
</dbReference>
<dbReference type="PROSITE" id="PS00906">
    <property type="entry name" value="UROD_1"/>
    <property type="match status" value="1"/>
</dbReference>
<dbReference type="PROSITE" id="PS00907">
    <property type="entry name" value="UROD_2"/>
    <property type="match status" value="1"/>
</dbReference>
<feature type="chain" id="PRO_0000187593" description="Uroporphyrinogen decarboxylase">
    <location>
        <begin position="1"/>
        <end position="333"/>
    </location>
</feature>
<feature type="binding site" evidence="1">
    <location>
        <begin position="21"/>
        <end position="25"/>
    </location>
    <ligand>
        <name>substrate</name>
    </ligand>
</feature>
<feature type="binding site" evidence="1">
    <location>
        <position position="70"/>
    </location>
    <ligand>
        <name>substrate</name>
    </ligand>
</feature>
<feature type="binding site" evidence="1">
    <location>
        <position position="139"/>
    </location>
    <ligand>
        <name>substrate</name>
    </ligand>
</feature>
<feature type="binding site" evidence="1">
    <location>
        <position position="194"/>
    </location>
    <ligand>
        <name>substrate</name>
    </ligand>
</feature>
<feature type="binding site" evidence="1">
    <location>
        <position position="309"/>
    </location>
    <ligand>
        <name>substrate</name>
    </ligand>
</feature>
<feature type="site" description="Transition state stabilizer" evidence="1">
    <location>
        <position position="70"/>
    </location>
</feature>
<comment type="function">
    <text evidence="1">Catalyzes the decarboxylation of four acetate groups of uroporphyrinogen-III to yield coproporphyrinogen-III.</text>
</comment>
<comment type="catalytic activity">
    <reaction evidence="1">
        <text>uroporphyrinogen III + 4 H(+) = coproporphyrinogen III + 4 CO2</text>
        <dbReference type="Rhea" id="RHEA:19865"/>
        <dbReference type="ChEBI" id="CHEBI:15378"/>
        <dbReference type="ChEBI" id="CHEBI:16526"/>
        <dbReference type="ChEBI" id="CHEBI:57308"/>
        <dbReference type="ChEBI" id="CHEBI:57309"/>
        <dbReference type="EC" id="4.1.1.37"/>
    </reaction>
</comment>
<comment type="pathway">
    <text evidence="1">Porphyrin-containing compound metabolism; protoporphyrin-IX biosynthesis; coproporphyrinogen-III from 5-aminolevulinate: step 4/4.</text>
</comment>
<comment type="subunit">
    <text evidence="1">Homodimer.</text>
</comment>
<comment type="subcellular location">
    <subcellularLocation>
        <location evidence="1">Cytoplasm</location>
    </subcellularLocation>
</comment>
<comment type="similarity">
    <text evidence="1">Belongs to the uroporphyrinogen decarboxylase family.</text>
</comment>
<name>DCUP_CHLCV</name>
<proteinExistence type="inferred from homology"/>